<feature type="chain" id="PRO_0000412497" description="Malonyl-[acyl-carrier protein] O-methyltransferase">
    <location>
        <begin position="1"/>
        <end position="262"/>
    </location>
</feature>
<proteinExistence type="inferred from homology"/>
<name>BIOC_ERWP6</name>
<protein>
    <recommendedName>
        <fullName evidence="1">Malonyl-[acyl-carrier protein] O-methyltransferase</fullName>
        <shortName evidence="1">Malonyl-ACP O-methyltransferase</shortName>
        <ecNumber evidence="1">2.1.1.197</ecNumber>
    </recommendedName>
    <alternativeName>
        <fullName evidence="1">Biotin synthesis protein BioC</fullName>
    </alternativeName>
</protein>
<accession>D2T333</accession>
<dbReference type="EC" id="2.1.1.197" evidence="1"/>
<dbReference type="EMBL" id="FN392235">
    <property type="protein sequence ID" value="CAY74975.1"/>
    <property type="molecule type" value="Genomic_DNA"/>
</dbReference>
<dbReference type="SMR" id="D2T333"/>
<dbReference type="KEGG" id="epr:EPYR_02595"/>
<dbReference type="PATRIC" id="fig|644651.3.peg.2363"/>
<dbReference type="HOGENOM" id="CLU_046586_2_2_6"/>
<dbReference type="UniPathway" id="UPA00078"/>
<dbReference type="GO" id="GO:0010340">
    <property type="term" value="F:carboxyl-O-methyltransferase activity"/>
    <property type="evidence" value="ECO:0007669"/>
    <property type="project" value="UniProtKB-UniRule"/>
</dbReference>
<dbReference type="GO" id="GO:0102130">
    <property type="term" value="F:malonyl-CoA methyltransferase activity"/>
    <property type="evidence" value="ECO:0007669"/>
    <property type="project" value="UniProtKB-EC"/>
</dbReference>
<dbReference type="GO" id="GO:0008757">
    <property type="term" value="F:S-adenosylmethionine-dependent methyltransferase activity"/>
    <property type="evidence" value="ECO:0007669"/>
    <property type="project" value="InterPro"/>
</dbReference>
<dbReference type="GO" id="GO:0009102">
    <property type="term" value="P:biotin biosynthetic process"/>
    <property type="evidence" value="ECO:0007669"/>
    <property type="project" value="UniProtKB-UniRule"/>
</dbReference>
<dbReference type="GO" id="GO:0032259">
    <property type="term" value="P:methylation"/>
    <property type="evidence" value="ECO:0007669"/>
    <property type="project" value="UniProtKB-KW"/>
</dbReference>
<dbReference type="CDD" id="cd02440">
    <property type="entry name" value="AdoMet_MTases"/>
    <property type="match status" value="1"/>
</dbReference>
<dbReference type="Gene3D" id="3.40.50.150">
    <property type="entry name" value="Vaccinia Virus protein VP39"/>
    <property type="match status" value="1"/>
</dbReference>
<dbReference type="HAMAP" id="MF_00835">
    <property type="entry name" value="BioC"/>
    <property type="match status" value="1"/>
</dbReference>
<dbReference type="InterPro" id="IPR011814">
    <property type="entry name" value="BioC"/>
</dbReference>
<dbReference type="InterPro" id="IPR013216">
    <property type="entry name" value="Methyltransf_11"/>
</dbReference>
<dbReference type="InterPro" id="IPR029063">
    <property type="entry name" value="SAM-dependent_MTases_sf"/>
</dbReference>
<dbReference type="NCBIfam" id="TIGR02072">
    <property type="entry name" value="BioC"/>
    <property type="match status" value="1"/>
</dbReference>
<dbReference type="PANTHER" id="PTHR43464:SF94">
    <property type="entry name" value="MALONYL-[ACYL-CARRIER PROTEIN] O-METHYLTRANSFERASE"/>
    <property type="match status" value="1"/>
</dbReference>
<dbReference type="PANTHER" id="PTHR43464">
    <property type="entry name" value="METHYLTRANSFERASE"/>
    <property type="match status" value="1"/>
</dbReference>
<dbReference type="Pfam" id="PF08241">
    <property type="entry name" value="Methyltransf_11"/>
    <property type="match status" value="1"/>
</dbReference>
<dbReference type="SUPFAM" id="SSF53335">
    <property type="entry name" value="S-adenosyl-L-methionine-dependent methyltransferases"/>
    <property type="match status" value="1"/>
</dbReference>
<gene>
    <name evidence="1" type="primary">bioC</name>
    <name type="ordered locus">EPYR_02595</name>
</gene>
<evidence type="ECO:0000255" key="1">
    <source>
        <dbReference type="HAMAP-Rule" id="MF_00835"/>
    </source>
</evidence>
<reference key="1">
    <citation type="journal article" date="2010" name="BMC Genomics">
        <title>Complete genome sequence of the fire blight pathogen Erwinia pyrifoliae DSM 12163T and comparative genomic insights into plant pathogenicity.</title>
        <authorList>
            <person name="Smits T.H."/>
            <person name="Jaenicke S."/>
            <person name="Rezzonico F."/>
            <person name="Kamber T."/>
            <person name="Goesmann A."/>
            <person name="Frey J.E."/>
            <person name="Duffy B."/>
        </authorList>
    </citation>
    <scope>NUCLEOTIDE SEQUENCE [LARGE SCALE GENOMIC DNA]</scope>
    <source>
        <strain>DSM 12163 / CIP 106111 / Ep16/96</strain>
    </source>
</reference>
<sequence>MISTACWRDCMPQTVNKQAVAAAFGRAARSYNQHAELQRQCGERLLEHARPGNALRVLDAGCGTGWFSQRWRAGGHWVTALDLSEKMLQHARENQAADCYLPGDIEALPFADASFDRCWSNLAVQWCSSLPLALRELRRVTKPGGQVLFSTLTEGSLKEVSAAWQQIGRSAPLNRFASLPVIEQAAGSLALTLAGYTLTLAFPDVLSALRSLKGIGATHLHQGRSNGMISRRELQQLEQVWQRDARGCLLSYQLVSGVIERE</sequence>
<keyword id="KW-0093">Biotin biosynthesis</keyword>
<keyword id="KW-0489">Methyltransferase</keyword>
<keyword id="KW-0949">S-adenosyl-L-methionine</keyword>
<keyword id="KW-0808">Transferase</keyword>
<comment type="function">
    <text evidence="1">Converts the free carboxyl group of a malonyl-thioester to its methyl ester by transfer of a methyl group from S-adenosyl-L-methionine (SAM). It allows to synthesize pimeloyl-ACP via the fatty acid synthetic pathway.</text>
</comment>
<comment type="catalytic activity">
    <reaction evidence="1">
        <text>malonyl-[ACP] + S-adenosyl-L-methionine = malonyl-[ACP] methyl ester + S-adenosyl-L-homocysteine</text>
        <dbReference type="Rhea" id="RHEA:17105"/>
        <dbReference type="Rhea" id="RHEA-COMP:9623"/>
        <dbReference type="Rhea" id="RHEA-COMP:9954"/>
        <dbReference type="ChEBI" id="CHEBI:57856"/>
        <dbReference type="ChEBI" id="CHEBI:59789"/>
        <dbReference type="ChEBI" id="CHEBI:78449"/>
        <dbReference type="ChEBI" id="CHEBI:78845"/>
        <dbReference type="EC" id="2.1.1.197"/>
    </reaction>
</comment>
<comment type="pathway">
    <text evidence="1">Cofactor biosynthesis; biotin biosynthesis.</text>
</comment>
<comment type="similarity">
    <text evidence="1">Belongs to the methyltransferase superfamily.</text>
</comment>
<organism>
    <name type="scientific">Erwinia pyrifoliae (strain DSM 12163 / CIP 106111 / Ep16/96)</name>
    <dbReference type="NCBI Taxonomy" id="644651"/>
    <lineage>
        <taxon>Bacteria</taxon>
        <taxon>Pseudomonadati</taxon>
        <taxon>Pseudomonadota</taxon>
        <taxon>Gammaproteobacteria</taxon>
        <taxon>Enterobacterales</taxon>
        <taxon>Erwiniaceae</taxon>
        <taxon>Erwinia</taxon>
    </lineage>
</organism>